<reference key="1">
    <citation type="journal article" date="1999" name="Nature">
        <title>Sequence and analysis of chromosome 2 of the plant Arabidopsis thaliana.</title>
        <authorList>
            <person name="Lin X."/>
            <person name="Kaul S."/>
            <person name="Rounsley S.D."/>
            <person name="Shea T.P."/>
            <person name="Benito M.-I."/>
            <person name="Town C.D."/>
            <person name="Fujii C.Y."/>
            <person name="Mason T.M."/>
            <person name="Bowman C.L."/>
            <person name="Barnstead M.E."/>
            <person name="Feldblyum T.V."/>
            <person name="Buell C.R."/>
            <person name="Ketchum K.A."/>
            <person name="Lee J.J."/>
            <person name="Ronning C.M."/>
            <person name="Koo H.L."/>
            <person name="Moffat K.S."/>
            <person name="Cronin L.A."/>
            <person name="Shen M."/>
            <person name="Pai G."/>
            <person name="Van Aken S."/>
            <person name="Umayam L."/>
            <person name="Tallon L.J."/>
            <person name="Gill J.E."/>
            <person name="Adams M.D."/>
            <person name="Carrera A.J."/>
            <person name="Creasy T.H."/>
            <person name="Goodman H.M."/>
            <person name="Somerville C.R."/>
            <person name="Copenhaver G.P."/>
            <person name="Preuss D."/>
            <person name="Nierman W.C."/>
            <person name="White O."/>
            <person name="Eisen J.A."/>
            <person name="Salzberg S.L."/>
            <person name="Fraser C.M."/>
            <person name="Venter J.C."/>
        </authorList>
    </citation>
    <scope>NUCLEOTIDE SEQUENCE [LARGE SCALE GENOMIC DNA]</scope>
    <source>
        <strain>cv. Columbia</strain>
    </source>
</reference>
<reference key="2">
    <citation type="journal article" date="2017" name="Plant J.">
        <title>Araport11: a complete reannotation of the Arabidopsis thaliana reference genome.</title>
        <authorList>
            <person name="Cheng C.Y."/>
            <person name="Krishnakumar V."/>
            <person name="Chan A.P."/>
            <person name="Thibaud-Nissen F."/>
            <person name="Schobel S."/>
            <person name="Town C.D."/>
        </authorList>
    </citation>
    <scope>GENOME REANNOTATION</scope>
    <source>
        <strain>cv. Columbia</strain>
    </source>
</reference>
<reference key="3">
    <citation type="journal article" date="2006" name="J. Exp. Bot.">
        <title>Dissecting salt stress pathways.</title>
        <authorList>
            <person name="Ma S."/>
            <person name="Gong Q."/>
            <person name="Bohnert H.J."/>
        </authorList>
    </citation>
    <scope>INDUCTION BY SALT</scope>
    <source>
        <strain>cv. Columbia</strain>
    </source>
</reference>
<comment type="catalytic activity">
    <reaction evidence="1">
        <text>ATP + H2O = ADP + phosphate + H(+)</text>
        <dbReference type="Rhea" id="RHEA:13065"/>
        <dbReference type="ChEBI" id="CHEBI:15377"/>
        <dbReference type="ChEBI" id="CHEBI:15378"/>
        <dbReference type="ChEBI" id="CHEBI:30616"/>
        <dbReference type="ChEBI" id="CHEBI:43474"/>
        <dbReference type="ChEBI" id="CHEBI:456216"/>
    </reaction>
</comment>
<comment type="cofactor">
    <cofactor evidence="1">
        <name>Mg(2+)</name>
        <dbReference type="ChEBI" id="CHEBI:18420"/>
    </cofactor>
</comment>
<comment type="subcellular location">
    <subcellularLocation>
        <location evidence="2">Membrane</location>
        <topology evidence="2">Single-pass membrane protein</topology>
    </subcellularLocation>
</comment>
<comment type="induction">
    <text evidence="4">Induced in roots by salt stress.</text>
</comment>
<comment type="similarity">
    <text evidence="5">Belongs to the AAA ATPase family. BCS1 subfamily.</text>
</comment>
<comment type="sequence caution" evidence="5">
    <conflict type="erroneous gene model prediction">
        <sequence resource="EMBL-CDS" id="AAD31347"/>
    </conflict>
    <text>The predicted gene At2g18190 has been split into 2 genes: At2g18190 and At2g18193.</text>
</comment>
<sequence length="494" mass="56289">MFPSISNISLSPSSLFTAYASLTGFLMLFRSLFNDEVPERLRSYITDLLNRFFTPKSKNLTMVIDEIIGFKRNQVFDAAEVYLRNKIGPETARLRVGKLPKQKHFTIYIEKGEEILDTFENSELRWTYVESENEASQKEKRYYELTFEKKLRDKVMNSYLSHVVAESEETKRDLRAVKLYSRDVRASKDDDGMAGAGWGCINLEHPSTFETLAMDPGAKKKIIDDMERFLKRREFYKRVGKAWKRGYLLYGPPGTGKSSLIAAMANYLKFDVFDLELSSIYENAQLKSILLSTTNRSILVIEDIDCSSAEVVDREADEYQEYEEGYYGRVTLSGLLNFVDGLWSSFGDERIIVFTTNHKERLDPALLRPGRMDMHINMSYCTGLGFRTLVSNYLGLGGLNHPLCEEIEALIDSTEVTPAELAEELMQEDDTDVVLRGVVSFVENRKVEISKTKELEGSTCRKLDGDDKHNVSSTNDLKKTKKKKKGGKGKAKGN</sequence>
<organism evidence="7">
    <name type="scientific">Arabidopsis thaliana</name>
    <name type="common">Mouse-ear cress</name>
    <dbReference type="NCBI Taxonomy" id="3702"/>
    <lineage>
        <taxon>Eukaryota</taxon>
        <taxon>Viridiplantae</taxon>
        <taxon>Streptophyta</taxon>
        <taxon>Embryophyta</taxon>
        <taxon>Tracheophyta</taxon>
        <taxon>Spermatophyta</taxon>
        <taxon>Magnoliopsida</taxon>
        <taxon>eudicotyledons</taxon>
        <taxon>Gunneridae</taxon>
        <taxon>Pentapetalae</taxon>
        <taxon>rosids</taxon>
        <taxon>malvids</taxon>
        <taxon>Brassicales</taxon>
        <taxon>Brassicaceae</taxon>
        <taxon>Camelineae</taxon>
        <taxon>Arabidopsis</taxon>
    </lineage>
</organism>
<name>AATP2_ARATH</name>
<evidence type="ECO:0000250" key="1">
    <source>
        <dbReference type="UniProtKB" id="Q9FLD5"/>
    </source>
</evidence>
<evidence type="ECO:0000255" key="2"/>
<evidence type="ECO:0000256" key="3">
    <source>
        <dbReference type="SAM" id="MobiDB-lite"/>
    </source>
</evidence>
<evidence type="ECO:0000269" key="4">
    <source>
    </source>
</evidence>
<evidence type="ECO:0000305" key="5"/>
<evidence type="ECO:0000312" key="6">
    <source>
        <dbReference type="EMBL" id="AEC06736.1"/>
    </source>
</evidence>
<evidence type="ECO:0000312" key="7">
    <source>
        <dbReference type="Proteomes" id="UP000006548"/>
    </source>
</evidence>
<feature type="chain" id="PRO_0000434704" description="AAA-ATPase At2g18190">
    <location>
        <begin position="1"/>
        <end position="494"/>
    </location>
</feature>
<feature type="transmembrane region" description="Helical" evidence="2">
    <location>
        <begin position="13"/>
        <end position="29"/>
    </location>
</feature>
<feature type="region of interest" description="Disordered" evidence="3">
    <location>
        <begin position="459"/>
        <end position="494"/>
    </location>
</feature>
<feature type="compositionally biased region" description="Basic and acidic residues" evidence="3">
    <location>
        <begin position="459"/>
        <end position="470"/>
    </location>
</feature>
<feature type="compositionally biased region" description="Basic residues" evidence="3">
    <location>
        <begin position="479"/>
        <end position="494"/>
    </location>
</feature>
<feature type="binding site" evidence="2">
    <location>
        <begin position="251"/>
        <end position="258"/>
    </location>
    <ligand>
        <name>ATP</name>
        <dbReference type="ChEBI" id="CHEBI:30616"/>
    </ligand>
</feature>
<proteinExistence type="evidence at transcript level"/>
<keyword id="KW-0067">ATP-binding</keyword>
<keyword id="KW-0378">Hydrolase</keyword>
<keyword id="KW-0460">Magnesium</keyword>
<keyword id="KW-0472">Membrane</keyword>
<keyword id="KW-0547">Nucleotide-binding</keyword>
<keyword id="KW-1185">Reference proteome</keyword>
<keyword id="KW-0812">Transmembrane</keyword>
<keyword id="KW-1133">Transmembrane helix</keyword>
<accession>F4IQG2</accession>
<accession>Q9SI12</accession>
<dbReference type="EC" id="3.6.1.-" evidence="1"/>
<dbReference type="EMBL" id="AC007212">
    <property type="protein sequence ID" value="AAD31347.1"/>
    <property type="status" value="ALT_SEQ"/>
    <property type="molecule type" value="Genomic_DNA"/>
</dbReference>
<dbReference type="EMBL" id="CP002685">
    <property type="protein sequence ID" value="AEC06736.1"/>
    <property type="molecule type" value="Genomic_DNA"/>
</dbReference>
<dbReference type="PIR" id="D84561">
    <property type="entry name" value="D84561"/>
</dbReference>
<dbReference type="RefSeq" id="NP_179411.2">
    <property type="nucleotide sequence ID" value="NM_127376.3"/>
</dbReference>
<dbReference type="SMR" id="F4IQG2"/>
<dbReference type="FunCoup" id="F4IQG2">
    <property type="interactions" value="1389"/>
</dbReference>
<dbReference type="STRING" id="3702.F4IQG2"/>
<dbReference type="PaxDb" id="3702-AT2G18190.1"/>
<dbReference type="ProteomicsDB" id="244344"/>
<dbReference type="EnsemblPlants" id="AT2G18190.1">
    <property type="protein sequence ID" value="AT2G18190.1"/>
    <property type="gene ID" value="AT2G18190"/>
</dbReference>
<dbReference type="GeneID" id="816332"/>
<dbReference type="Gramene" id="AT2G18190.1">
    <property type="protein sequence ID" value="AT2G18190.1"/>
    <property type="gene ID" value="AT2G18190"/>
</dbReference>
<dbReference type="KEGG" id="ath:AT2G18190"/>
<dbReference type="Araport" id="AT2G18190"/>
<dbReference type="TAIR" id="AT2G18190"/>
<dbReference type="eggNOG" id="KOG0743">
    <property type="taxonomic scope" value="Eukaryota"/>
</dbReference>
<dbReference type="HOGENOM" id="CLU_010189_0_1_1"/>
<dbReference type="InParanoid" id="F4IQG2"/>
<dbReference type="OMA" id="SFATCMM"/>
<dbReference type="PRO" id="PR:F4IQG2"/>
<dbReference type="Proteomes" id="UP000006548">
    <property type="component" value="Chromosome 2"/>
</dbReference>
<dbReference type="ExpressionAtlas" id="F4IQG2">
    <property type="expression patterns" value="baseline and differential"/>
</dbReference>
<dbReference type="GO" id="GO:0016020">
    <property type="term" value="C:membrane"/>
    <property type="evidence" value="ECO:0007669"/>
    <property type="project" value="UniProtKB-SubCell"/>
</dbReference>
<dbReference type="GO" id="GO:0005524">
    <property type="term" value="F:ATP binding"/>
    <property type="evidence" value="ECO:0007669"/>
    <property type="project" value="UniProtKB-KW"/>
</dbReference>
<dbReference type="GO" id="GO:0016887">
    <property type="term" value="F:ATP hydrolysis activity"/>
    <property type="evidence" value="ECO:0007669"/>
    <property type="project" value="InterPro"/>
</dbReference>
<dbReference type="GO" id="GO:0009651">
    <property type="term" value="P:response to salt stress"/>
    <property type="evidence" value="ECO:0000270"/>
    <property type="project" value="UniProtKB"/>
</dbReference>
<dbReference type="CDD" id="cd19510">
    <property type="entry name" value="RecA-like_BCS1"/>
    <property type="match status" value="1"/>
</dbReference>
<dbReference type="Gene3D" id="6.10.280.40">
    <property type="match status" value="1"/>
</dbReference>
<dbReference type="Gene3D" id="3.40.50.300">
    <property type="entry name" value="P-loop containing nucleotide triphosphate hydrolases"/>
    <property type="match status" value="1"/>
</dbReference>
<dbReference type="InterPro" id="IPR003593">
    <property type="entry name" value="AAA+_ATPase"/>
</dbReference>
<dbReference type="InterPro" id="IPR025753">
    <property type="entry name" value="AAA_N_dom"/>
</dbReference>
<dbReference type="InterPro" id="IPR003959">
    <property type="entry name" value="ATPase_AAA_core"/>
</dbReference>
<dbReference type="InterPro" id="IPR003960">
    <property type="entry name" value="ATPase_AAA_CS"/>
</dbReference>
<dbReference type="InterPro" id="IPR050747">
    <property type="entry name" value="Mitochondrial_chaperone_BCS1"/>
</dbReference>
<dbReference type="InterPro" id="IPR027417">
    <property type="entry name" value="P-loop_NTPase"/>
</dbReference>
<dbReference type="PANTHER" id="PTHR23070">
    <property type="entry name" value="BCS1 AAA-TYPE ATPASE"/>
    <property type="match status" value="1"/>
</dbReference>
<dbReference type="Pfam" id="PF00004">
    <property type="entry name" value="AAA"/>
    <property type="match status" value="1"/>
</dbReference>
<dbReference type="Pfam" id="PF14363">
    <property type="entry name" value="AAA_assoc"/>
    <property type="match status" value="1"/>
</dbReference>
<dbReference type="SMART" id="SM00382">
    <property type="entry name" value="AAA"/>
    <property type="match status" value="1"/>
</dbReference>
<dbReference type="SUPFAM" id="SSF52540">
    <property type="entry name" value="P-loop containing nucleoside triphosphate hydrolases"/>
    <property type="match status" value="1"/>
</dbReference>
<dbReference type="PROSITE" id="PS00674">
    <property type="entry name" value="AAA"/>
    <property type="match status" value="1"/>
</dbReference>
<gene>
    <name evidence="6" type="ordered locus">At2g18190</name>
    <name evidence="5" type="ORF">F8D23</name>
</gene>
<protein>
    <recommendedName>
        <fullName>AAA-ATPase At2g18190</fullName>
        <ecNumber evidence="1">3.6.1.-</ecNumber>
    </recommendedName>
</protein>